<proteinExistence type="inferred from homology"/>
<accession>Q15VI7</accession>
<feature type="chain" id="PRO_1000006503" description="tRNA (guanine-N(1)-)-methyltransferase">
    <location>
        <begin position="1"/>
        <end position="265"/>
    </location>
</feature>
<feature type="binding site" evidence="1">
    <location>
        <position position="119"/>
    </location>
    <ligand>
        <name>S-adenosyl-L-methionine</name>
        <dbReference type="ChEBI" id="CHEBI:59789"/>
    </ligand>
</feature>
<feature type="binding site" evidence="1">
    <location>
        <begin position="139"/>
        <end position="144"/>
    </location>
    <ligand>
        <name>S-adenosyl-L-methionine</name>
        <dbReference type="ChEBI" id="CHEBI:59789"/>
    </ligand>
</feature>
<gene>
    <name evidence="1" type="primary">trmD</name>
    <name type="ordered locus">Patl_1579</name>
</gene>
<evidence type="ECO:0000255" key="1">
    <source>
        <dbReference type="HAMAP-Rule" id="MF_00605"/>
    </source>
</evidence>
<keyword id="KW-0963">Cytoplasm</keyword>
<keyword id="KW-0489">Methyltransferase</keyword>
<keyword id="KW-0949">S-adenosyl-L-methionine</keyword>
<keyword id="KW-0808">Transferase</keyword>
<keyword id="KW-0819">tRNA processing</keyword>
<protein>
    <recommendedName>
        <fullName evidence="1">tRNA (guanine-N(1)-)-methyltransferase</fullName>
        <ecNumber evidence="1">2.1.1.228</ecNumber>
    </recommendedName>
    <alternativeName>
        <fullName evidence="1">M1G-methyltransferase</fullName>
    </alternativeName>
    <alternativeName>
        <fullName evidence="1">tRNA [GM37] methyltransferase</fullName>
    </alternativeName>
</protein>
<reference key="1">
    <citation type="submission" date="2006-06" db="EMBL/GenBank/DDBJ databases">
        <title>Complete sequence of Pseudoalteromonas atlantica T6c.</title>
        <authorList>
            <consortium name="US DOE Joint Genome Institute"/>
            <person name="Copeland A."/>
            <person name="Lucas S."/>
            <person name="Lapidus A."/>
            <person name="Barry K."/>
            <person name="Detter J.C."/>
            <person name="Glavina del Rio T."/>
            <person name="Hammon N."/>
            <person name="Israni S."/>
            <person name="Dalin E."/>
            <person name="Tice H."/>
            <person name="Pitluck S."/>
            <person name="Saunders E."/>
            <person name="Brettin T."/>
            <person name="Bruce D."/>
            <person name="Han C."/>
            <person name="Tapia R."/>
            <person name="Gilna P."/>
            <person name="Schmutz J."/>
            <person name="Larimer F."/>
            <person name="Land M."/>
            <person name="Hauser L."/>
            <person name="Kyrpides N."/>
            <person name="Kim E."/>
            <person name="Karls A.C."/>
            <person name="Bartlett D."/>
            <person name="Higgins B.P."/>
            <person name="Richardson P."/>
        </authorList>
    </citation>
    <scope>NUCLEOTIDE SEQUENCE [LARGE SCALE GENOMIC DNA]</scope>
    <source>
        <strain>T6c / ATCC BAA-1087</strain>
    </source>
</reference>
<sequence length="265" mass="29832">MSSDTQRWFGVVSLFPEMFQTFTEQGVTGRAVKSGKLKVDFFNPRDFTHDKHRTVDDRPYGGGPGMLMMVQPLLDAIRAAKQAAEKKTKVIYLSPQGKTLTQRGVKQLSENESVILVAGRYEGIDERVIEAEIDEEWSVGDYILSGGELPAMILMDAVARLVPGVLGHAQSAEQDSFSDGLLDCPHYTRPENLNGQSVPSVLLSGDHQKIKQWRDKQSLGRTWQRRPELLNDLALTEEQQRLLDEYQQELLQQNGSYSGMRGYDE</sequence>
<comment type="function">
    <text evidence="1">Specifically methylates guanosine-37 in various tRNAs.</text>
</comment>
<comment type="catalytic activity">
    <reaction evidence="1">
        <text>guanosine(37) in tRNA + S-adenosyl-L-methionine = N(1)-methylguanosine(37) in tRNA + S-adenosyl-L-homocysteine + H(+)</text>
        <dbReference type="Rhea" id="RHEA:36899"/>
        <dbReference type="Rhea" id="RHEA-COMP:10145"/>
        <dbReference type="Rhea" id="RHEA-COMP:10147"/>
        <dbReference type="ChEBI" id="CHEBI:15378"/>
        <dbReference type="ChEBI" id="CHEBI:57856"/>
        <dbReference type="ChEBI" id="CHEBI:59789"/>
        <dbReference type="ChEBI" id="CHEBI:73542"/>
        <dbReference type="ChEBI" id="CHEBI:74269"/>
        <dbReference type="EC" id="2.1.1.228"/>
    </reaction>
</comment>
<comment type="subunit">
    <text evidence="1">Homodimer.</text>
</comment>
<comment type="subcellular location">
    <subcellularLocation>
        <location evidence="1">Cytoplasm</location>
    </subcellularLocation>
</comment>
<comment type="similarity">
    <text evidence="1">Belongs to the RNA methyltransferase TrmD family.</text>
</comment>
<organism>
    <name type="scientific">Pseudoalteromonas atlantica (strain T6c / ATCC BAA-1087)</name>
    <dbReference type="NCBI Taxonomy" id="3042615"/>
    <lineage>
        <taxon>Bacteria</taxon>
        <taxon>Pseudomonadati</taxon>
        <taxon>Pseudomonadota</taxon>
        <taxon>Gammaproteobacteria</taxon>
        <taxon>Alteromonadales</taxon>
        <taxon>Alteromonadaceae</taxon>
        <taxon>Paraglaciecola</taxon>
    </lineage>
</organism>
<name>TRMD_PSEA6</name>
<dbReference type="EC" id="2.1.1.228" evidence="1"/>
<dbReference type="EMBL" id="CP000388">
    <property type="protein sequence ID" value="ABG40101.1"/>
    <property type="molecule type" value="Genomic_DNA"/>
</dbReference>
<dbReference type="RefSeq" id="WP_006994623.1">
    <property type="nucleotide sequence ID" value="NC_008228.1"/>
</dbReference>
<dbReference type="SMR" id="Q15VI7"/>
<dbReference type="STRING" id="342610.Patl_1579"/>
<dbReference type="KEGG" id="pat:Patl_1579"/>
<dbReference type="eggNOG" id="COG0336">
    <property type="taxonomic scope" value="Bacteria"/>
</dbReference>
<dbReference type="HOGENOM" id="CLU_047363_0_1_6"/>
<dbReference type="OrthoDB" id="9807416at2"/>
<dbReference type="Proteomes" id="UP000001981">
    <property type="component" value="Chromosome"/>
</dbReference>
<dbReference type="GO" id="GO:0005829">
    <property type="term" value="C:cytosol"/>
    <property type="evidence" value="ECO:0007669"/>
    <property type="project" value="TreeGrafter"/>
</dbReference>
<dbReference type="GO" id="GO:0052906">
    <property type="term" value="F:tRNA (guanine(37)-N1)-methyltransferase activity"/>
    <property type="evidence" value="ECO:0007669"/>
    <property type="project" value="UniProtKB-UniRule"/>
</dbReference>
<dbReference type="GO" id="GO:0002939">
    <property type="term" value="P:tRNA N1-guanine methylation"/>
    <property type="evidence" value="ECO:0007669"/>
    <property type="project" value="TreeGrafter"/>
</dbReference>
<dbReference type="CDD" id="cd18080">
    <property type="entry name" value="TrmD-like"/>
    <property type="match status" value="1"/>
</dbReference>
<dbReference type="FunFam" id="1.10.1270.20:FF:000001">
    <property type="entry name" value="tRNA (guanine-N(1)-)-methyltransferase"/>
    <property type="match status" value="1"/>
</dbReference>
<dbReference type="FunFam" id="3.40.1280.10:FF:000001">
    <property type="entry name" value="tRNA (guanine-N(1)-)-methyltransferase"/>
    <property type="match status" value="1"/>
</dbReference>
<dbReference type="Gene3D" id="3.40.1280.10">
    <property type="match status" value="1"/>
</dbReference>
<dbReference type="Gene3D" id="1.10.1270.20">
    <property type="entry name" value="tRNA(m1g37)methyltransferase, domain 2"/>
    <property type="match status" value="1"/>
</dbReference>
<dbReference type="HAMAP" id="MF_00605">
    <property type="entry name" value="TrmD"/>
    <property type="match status" value="1"/>
</dbReference>
<dbReference type="InterPro" id="IPR029028">
    <property type="entry name" value="Alpha/beta_knot_MTases"/>
</dbReference>
<dbReference type="InterPro" id="IPR023148">
    <property type="entry name" value="tRNA_m1G_MeTrfase_C_sf"/>
</dbReference>
<dbReference type="InterPro" id="IPR002649">
    <property type="entry name" value="tRNA_m1G_MeTrfase_TrmD"/>
</dbReference>
<dbReference type="InterPro" id="IPR029026">
    <property type="entry name" value="tRNA_m1G_MTases_N"/>
</dbReference>
<dbReference type="InterPro" id="IPR016009">
    <property type="entry name" value="tRNA_MeTrfase_TRMD/TRM10"/>
</dbReference>
<dbReference type="NCBIfam" id="NF000648">
    <property type="entry name" value="PRK00026.1"/>
    <property type="match status" value="1"/>
</dbReference>
<dbReference type="NCBIfam" id="TIGR00088">
    <property type="entry name" value="trmD"/>
    <property type="match status" value="1"/>
</dbReference>
<dbReference type="PANTHER" id="PTHR46417">
    <property type="entry name" value="TRNA (GUANINE-N(1)-)-METHYLTRANSFERASE"/>
    <property type="match status" value="1"/>
</dbReference>
<dbReference type="PANTHER" id="PTHR46417:SF1">
    <property type="entry name" value="TRNA (GUANINE-N(1)-)-METHYLTRANSFERASE"/>
    <property type="match status" value="1"/>
</dbReference>
<dbReference type="Pfam" id="PF01746">
    <property type="entry name" value="tRNA_m1G_MT"/>
    <property type="match status" value="1"/>
</dbReference>
<dbReference type="PIRSF" id="PIRSF000386">
    <property type="entry name" value="tRNA_mtase"/>
    <property type="match status" value="1"/>
</dbReference>
<dbReference type="SUPFAM" id="SSF75217">
    <property type="entry name" value="alpha/beta knot"/>
    <property type="match status" value="1"/>
</dbReference>